<feature type="chain" id="PRO_0000251644" description="Large ribosomal subunit protein uL16">
    <location>
        <begin position="1"/>
        <end position="138"/>
    </location>
</feature>
<proteinExistence type="inferred from homology"/>
<dbReference type="EMBL" id="AP007255">
    <property type="protein sequence ID" value="BAE51927.1"/>
    <property type="molecule type" value="Genomic_DNA"/>
</dbReference>
<dbReference type="RefSeq" id="WP_008615450.1">
    <property type="nucleotide sequence ID" value="NC_007626.1"/>
</dbReference>
<dbReference type="SMR" id="Q2W2J8"/>
<dbReference type="STRING" id="342108.amb3123"/>
<dbReference type="KEGG" id="mag:amb3123"/>
<dbReference type="HOGENOM" id="CLU_078858_2_1_5"/>
<dbReference type="OrthoDB" id="9802589at2"/>
<dbReference type="Proteomes" id="UP000007058">
    <property type="component" value="Chromosome"/>
</dbReference>
<dbReference type="GO" id="GO:0022625">
    <property type="term" value="C:cytosolic large ribosomal subunit"/>
    <property type="evidence" value="ECO:0007669"/>
    <property type="project" value="TreeGrafter"/>
</dbReference>
<dbReference type="GO" id="GO:0019843">
    <property type="term" value="F:rRNA binding"/>
    <property type="evidence" value="ECO:0007669"/>
    <property type="project" value="UniProtKB-UniRule"/>
</dbReference>
<dbReference type="GO" id="GO:0003735">
    <property type="term" value="F:structural constituent of ribosome"/>
    <property type="evidence" value="ECO:0007669"/>
    <property type="project" value="InterPro"/>
</dbReference>
<dbReference type="GO" id="GO:0000049">
    <property type="term" value="F:tRNA binding"/>
    <property type="evidence" value="ECO:0007669"/>
    <property type="project" value="UniProtKB-KW"/>
</dbReference>
<dbReference type="GO" id="GO:0006412">
    <property type="term" value="P:translation"/>
    <property type="evidence" value="ECO:0007669"/>
    <property type="project" value="UniProtKB-UniRule"/>
</dbReference>
<dbReference type="CDD" id="cd01433">
    <property type="entry name" value="Ribosomal_L16_L10e"/>
    <property type="match status" value="1"/>
</dbReference>
<dbReference type="FunFam" id="3.90.1170.10:FF:000001">
    <property type="entry name" value="50S ribosomal protein L16"/>
    <property type="match status" value="1"/>
</dbReference>
<dbReference type="Gene3D" id="3.90.1170.10">
    <property type="entry name" value="Ribosomal protein L10e/L16"/>
    <property type="match status" value="1"/>
</dbReference>
<dbReference type="HAMAP" id="MF_01342">
    <property type="entry name" value="Ribosomal_uL16"/>
    <property type="match status" value="1"/>
</dbReference>
<dbReference type="InterPro" id="IPR047873">
    <property type="entry name" value="Ribosomal_uL16"/>
</dbReference>
<dbReference type="InterPro" id="IPR000114">
    <property type="entry name" value="Ribosomal_uL16_bact-type"/>
</dbReference>
<dbReference type="InterPro" id="IPR020798">
    <property type="entry name" value="Ribosomal_uL16_CS"/>
</dbReference>
<dbReference type="InterPro" id="IPR016180">
    <property type="entry name" value="Ribosomal_uL16_dom"/>
</dbReference>
<dbReference type="InterPro" id="IPR036920">
    <property type="entry name" value="Ribosomal_uL16_sf"/>
</dbReference>
<dbReference type="NCBIfam" id="TIGR01164">
    <property type="entry name" value="rplP_bact"/>
    <property type="match status" value="1"/>
</dbReference>
<dbReference type="PANTHER" id="PTHR12220">
    <property type="entry name" value="50S/60S RIBOSOMAL PROTEIN L16"/>
    <property type="match status" value="1"/>
</dbReference>
<dbReference type="PANTHER" id="PTHR12220:SF13">
    <property type="entry name" value="LARGE RIBOSOMAL SUBUNIT PROTEIN UL16M"/>
    <property type="match status" value="1"/>
</dbReference>
<dbReference type="Pfam" id="PF00252">
    <property type="entry name" value="Ribosomal_L16"/>
    <property type="match status" value="1"/>
</dbReference>
<dbReference type="PRINTS" id="PR00060">
    <property type="entry name" value="RIBOSOMALL16"/>
</dbReference>
<dbReference type="SUPFAM" id="SSF54686">
    <property type="entry name" value="Ribosomal protein L16p/L10e"/>
    <property type="match status" value="1"/>
</dbReference>
<dbReference type="PROSITE" id="PS00586">
    <property type="entry name" value="RIBOSOMAL_L16_1"/>
    <property type="match status" value="1"/>
</dbReference>
<dbReference type="PROSITE" id="PS00701">
    <property type="entry name" value="RIBOSOMAL_L16_2"/>
    <property type="match status" value="1"/>
</dbReference>
<sequence length="138" mass="15244">MLSPKRTKFRKAHKGRIKGVTKGGSALNFGAYGLKALEPERITARQIEAARRALTRHMKRQGRVWIRIFPDLPVSSKPAEVRMGSGKGAPEFWTARVAPGRILFEVDGVAEEIARHGFALAAAKLPIKTKFISRIGDI</sequence>
<evidence type="ECO:0000255" key="1">
    <source>
        <dbReference type="HAMAP-Rule" id="MF_01342"/>
    </source>
</evidence>
<evidence type="ECO:0000305" key="2"/>
<keyword id="KW-0687">Ribonucleoprotein</keyword>
<keyword id="KW-0689">Ribosomal protein</keyword>
<keyword id="KW-0694">RNA-binding</keyword>
<keyword id="KW-0699">rRNA-binding</keyword>
<keyword id="KW-0820">tRNA-binding</keyword>
<reference key="1">
    <citation type="journal article" date="2005" name="DNA Res.">
        <title>Complete genome sequence of the facultative anaerobic magnetotactic bacterium Magnetospirillum sp. strain AMB-1.</title>
        <authorList>
            <person name="Matsunaga T."/>
            <person name="Okamura Y."/>
            <person name="Fukuda Y."/>
            <person name="Wahyudi A.T."/>
            <person name="Murase Y."/>
            <person name="Takeyama H."/>
        </authorList>
    </citation>
    <scope>NUCLEOTIDE SEQUENCE [LARGE SCALE GENOMIC DNA]</scope>
    <source>
        <strain>ATCC 700264 / AMB-1</strain>
    </source>
</reference>
<organism>
    <name type="scientific">Paramagnetospirillum magneticum (strain ATCC 700264 / AMB-1)</name>
    <name type="common">Magnetospirillum magneticum</name>
    <dbReference type="NCBI Taxonomy" id="342108"/>
    <lineage>
        <taxon>Bacteria</taxon>
        <taxon>Pseudomonadati</taxon>
        <taxon>Pseudomonadota</taxon>
        <taxon>Alphaproteobacteria</taxon>
        <taxon>Rhodospirillales</taxon>
        <taxon>Magnetospirillaceae</taxon>
        <taxon>Paramagnetospirillum</taxon>
    </lineage>
</organism>
<accession>Q2W2J8</accession>
<comment type="function">
    <text evidence="1">Binds 23S rRNA and is also seen to make contacts with the A and possibly P site tRNAs.</text>
</comment>
<comment type="subunit">
    <text evidence="1">Part of the 50S ribosomal subunit.</text>
</comment>
<comment type="similarity">
    <text evidence="1">Belongs to the universal ribosomal protein uL16 family.</text>
</comment>
<protein>
    <recommendedName>
        <fullName evidence="1">Large ribosomal subunit protein uL16</fullName>
    </recommendedName>
    <alternativeName>
        <fullName evidence="2">50S ribosomal protein L16</fullName>
    </alternativeName>
</protein>
<name>RL16_PARM1</name>
<gene>
    <name evidence="1" type="primary">rplP</name>
    <name type="ordered locus">amb3123</name>
</gene>